<proteinExistence type="inferred from homology"/>
<keyword id="KW-0028">Amino-acid biosynthesis</keyword>
<keyword id="KW-0057">Aromatic amino acid biosynthesis</keyword>
<keyword id="KW-0456">Lyase</keyword>
<keyword id="KW-0704">Schiff base</keyword>
<evidence type="ECO:0000255" key="1">
    <source>
        <dbReference type="HAMAP-Rule" id="MF_00214"/>
    </source>
</evidence>
<accession>B5RAU8</accession>
<name>AROD_SALG2</name>
<dbReference type="EC" id="4.2.1.10" evidence="1"/>
<dbReference type="EMBL" id="AM933173">
    <property type="protein sequence ID" value="CAR37616.1"/>
    <property type="molecule type" value="Genomic_DNA"/>
</dbReference>
<dbReference type="RefSeq" id="WP_000860224.1">
    <property type="nucleotide sequence ID" value="NC_011274.1"/>
</dbReference>
<dbReference type="SMR" id="B5RAU8"/>
<dbReference type="KEGG" id="seg:SG1758"/>
<dbReference type="HOGENOM" id="CLU_064444_0_0_6"/>
<dbReference type="UniPathway" id="UPA00053">
    <property type="reaction ID" value="UER00086"/>
</dbReference>
<dbReference type="Proteomes" id="UP000008321">
    <property type="component" value="Chromosome"/>
</dbReference>
<dbReference type="GO" id="GO:0003855">
    <property type="term" value="F:3-dehydroquinate dehydratase activity"/>
    <property type="evidence" value="ECO:0007669"/>
    <property type="project" value="UniProtKB-UniRule"/>
</dbReference>
<dbReference type="GO" id="GO:0046279">
    <property type="term" value="P:3,4-dihydroxybenzoate biosynthetic process"/>
    <property type="evidence" value="ECO:0007669"/>
    <property type="project" value="UniProtKB-ARBA"/>
</dbReference>
<dbReference type="GO" id="GO:0008652">
    <property type="term" value="P:amino acid biosynthetic process"/>
    <property type="evidence" value="ECO:0007669"/>
    <property type="project" value="UniProtKB-KW"/>
</dbReference>
<dbReference type="GO" id="GO:0009073">
    <property type="term" value="P:aromatic amino acid family biosynthetic process"/>
    <property type="evidence" value="ECO:0007669"/>
    <property type="project" value="UniProtKB-KW"/>
</dbReference>
<dbReference type="GO" id="GO:0009423">
    <property type="term" value="P:chorismate biosynthetic process"/>
    <property type="evidence" value="ECO:0007669"/>
    <property type="project" value="UniProtKB-UniRule"/>
</dbReference>
<dbReference type="CDD" id="cd00502">
    <property type="entry name" value="DHQase_I"/>
    <property type="match status" value="1"/>
</dbReference>
<dbReference type="FunFam" id="3.20.20.70:FF:000047">
    <property type="entry name" value="3-dehydroquinate dehydratase"/>
    <property type="match status" value="1"/>
</dbReference>
<dbReference type="Gene3D" id="3.20.20.70">
    <property type="entry name" value="Aldolase class I"/>
    <property type="match status" value="1"/>
</dbReference>
<dbReference type="HAMAP" id="MF_00214">
    <property type="entry name" value="AroD"/>
    <property type="match status" value="1"/>
</dbReference>
<dbReference type="InterPro" id="IPR018508">
    <property type="entry name" value="3-dehydroquinate_DH_AS"/>
</dbReference>
<dbReference type="InterPro" id="IPR013785">
    <property type="entry name" value="Aldolase_TIM"/>
</dbReference>
<dbReference type="InterPro" id="IPR001381">
    <property type="entry name" value="DHquinase_I"/>
</dbReference>
<dbReference type="InterPro" id="IPR050146">
    <property type="entry name" value="Type-I_3-dehydroquinase"/>
</dbReference>
<dbReference type="NCBIfam" id="TIGR01093">
    <property type="entry name" value="aroD"/>
    <property type="match status" value="1"/>
</dbReference>
<dbReference type="PANTHER" id="PTHR43699">
    <property type="entry name" value="3-DEHYDROQUINATE DEHYDRATASE"/>
    <property type="match status" value="1"/>
</dbReference>
<dbReference type="PANTHER" id="PTHR43699:SF1">
    <property type="entry name" value="3-DEHYDROQUINATE DEHYDRATASE"/>
    <property type="match status" value="1"/>
</dbReference>
<dbReference type="Pfam" id="PF01487">
    <property type="entry name" value="DHquinase_I"/>
    <property type="match status" value="1"/>
</dbReference>
<dbReference type="SUPFAM" id="SSF51569">
    <property type="entry name" value="Aldolase"/>
    <property type="match status" value="1"/>
</dbReference>
<dbReference type="PROSITE" id="PS01028">
    <property type="entry name" value="DEHYDROQUINASE_I"/>
    <property type="match status" value="1"/>
</dbReference>
<comment type="function">
    <text evidence="1">Involved in the third step of the chorismate pathway, which leads to the biosynthesis of aromatic amino acids. Catalyzes the cis-dehydration of 3-dehydroquinate (DHQ) and introduces the first double bond of the aromatic ring to yield 3-dehydroshikimate.</text>
</comment>
<comment type="catalytic activity">
    <reaction evidence="1">
        <text>3-dehydroquinate = 3-dehydroshikimate + H2O</text>
        <dbReference type="Rhea" id="RHEA:21096"/>
        <dbReference type="ChEBI" id="CHEBI:15377"/>
        <dbReference type="ChEBI" id="CHEBI:16630"/>
        <dbReference type="ChEBI" id="CHEBI:32364"/>
        <dbReference type="EC" id="4.2.1.10"/>
    </reaction>
</comment>
<comment type="pathway">
    <text evidence="1">Metabolic intermediate biosynthesis; chorismate biosynthesis; chorismate from D-erythrose 4-phosphate and phosphoenolpyruvate: step 3/7.</text>
</comment>
<comment type="subunit">
    <text evidence="1">Homodimer.</text>
</comment>
<comment type="similarity">
    <text evidence="1">Belongs to the type-I 3-dehydroquinase family.</text>
</comment>
<organism>
    <name type="scientific">Salmonella gallinarum (strain 287/91 / NCTC 13346)</name>
    <dbReference type="NCBI Taxonomy" id="550538"/>
    <lineage>
        <taxon>Bacteria</taxon>
        <taxon>Pseudomonadati</taxon>
        <taxon>Pseudomonadota</taxon>
        <taxon>Gammaproteobacteria</taxon>
        <taxon>Enterobacterales</taxon>
        <taxon>Enterobacteriaceae</taxon>
        <taxon>Salmonella</taxon>
    </lineage>
</organism>
<reference key="1">
    <citation type="journal article" date="2008" name="Genome Res.">
        <title>Comparative genome analysis of Salmonella enteritidis PT4 and Salmonella gallinarum 287/91 provides insights into evolutionary and host adaptation pathways.</title>
        <authorList>
            <person name="Thomson N.R."/>
            <person name="Clayton D.J."/>
            <person name="Windhorst D."/>
            <person name="Vernikos G."/>
            <person name="Davidson S."/>
            <person name="Churcher C."/>
            <person name="Quail M.A."/>
            <person name="Stevens M."/>
            <person name="Jones M.A."/>
            <person name="Watson M."/>
            <person name="Barron A."/>
            <person name="Layton A."/>
            <person name="Pickard D."/>
            <person name="Kingsley R.A."/>
            <person name="Bignell A."/>
            <person name="Clark L."/>
            <person name="Harris B."/>
            <person name="Ormond D."/>
            <person name="Abdellah Z."/>
            <person name="Brooks K."/>
            <person name="Cherevach I."/>
            <person name="Chillingworth T."/>
            <person name="Woodward J."/>
            <person name="Norberczak H."/>
            <person name="Lord A."/>
            <person name="Arrowsmith C."/>
            <person name="Jagels K."/>
            <person name="Moule S."/>
            <person name="Mungall K."/>
            <person name="Saunders M."/>
            <person name="Whitehead S."/>
            <person name="Chabalgoity J.A."/>
            <person name="Maskell D."/>
            <person name="Humphreys T."/>
            <person name="Roberts M."/>
            <person name="Barrow P.A."/>
            <person name="Dougan G."/>
            <person name="Parkhill J."/>
        </authorList>
    </citation>
    <scope>NUCLEOTIDE SEQUENCE [LARGE SCALE GENOMIC DNA]</scope>
    <source>
        <strain>287/91 / NCTC 13346</strain>
    </source>
</reference>
<feature type="chain" id="PRO_1000099915" description="3-dehydroquinate dehydratase">
    <location>
        <begin position="1"/>
        <end position="252"/>
    </location>
</feature>
<feature type="active site" description="Proton donor/acceptor" evidence="1">
    <location>
        <position position="143"/>
    </location>
</feature>
<feature type="active site" description="Schiff-base intermediate with substrate" evidence="1">
    <location>
        <position position="170"/>
    </location>
</feature>
<feature type="binding site" evidence="1">
    <location>
        <position position="21"/>
    </location>
    <ligand>
        <name>3-dehydroquinate</name>
        <dbReference type="ChEBI" id="CHEBI:32364"/>
    </ligand>
</feature>
<feature type="binding site" evidence="1">
    <location>
        <begin position="46"/>
        <end position="48"/>
    </location>
    <ligand>
        <name>3-dehydroquinate</name>
        <dbReference type="ChEBI" id="CHEBI:32364"/>
    </ligand>
</feature>
<feature type="binding site" evidence="1">
    <location>
        <position position="82"/>
    </location>
    <ligand>
        <name>3-dehydroquinate</name>
        <dbReference type="ChEBI" id="CHEBI:32364"/>
    </ligand>
</feature>
<feature type="binding site" evidence="1">
    <location>
        <position position="213"/>
    </location>
    <ligand>
        <name>3-dehydroquinate</name>
        <dbReference type="ChEBI" id="CHEBI:32364"/>
    </ligand>
</feature>
<feature type="binding site" evidence="1">
    <location>
        <position position="232"/>
    </location>
    <ligand>
        <name>3-dehydroquinate</name>
        <dbReference type="ChEBI" id="CHEBI:32364"/>
    </ligand>
</feature>
<feature type="binding site" evidence="1">
    <location>
        <position position="236"/>
    </location>
    <ligand>
        <name>3-dehydroquinate</name>
        <dbReference type="ChEBI" id="CHEBI:32364"/>
    </ligand>
</feature>
<gene>
    <name evidence="1" type="primary">aroD</name>
    <name type="ordered locus">SG1758</name>
</gene>
<sequence>MKTVTVRDLVVGEGAPKIIVSLMGKTITDVKSEALAYREADFDILEWRVDHFANVTTAESVLEAAGAIREIITDKPLLFTFRSAKEGGEQALTTGQYIALNRAAVDSGLVDMIDLELFTGDDEVKATVGYAHQHNVAVIMSNHDFHKTPAAEEIVQRLRKMQELGADIPKIAVMPQTKADVLTLLTATVEMQERYADRPIITMSMSKTGVISRLAGEVFGSAATFGAVKKASAPGQISVADLRTVLTILHQA</sequence>
<protein>
    <recommendedName>
        <fullName evidence="1">3-dehydroquinate dehydratase</fullName>
        <shortName evidence="1">3-dehydroquinase</shortName>
        <ecNumber evidence="1">4.2.1.10</ecNumber>
    </recommendedName>
    <alternativeName>
        <fullName evidence="1">Type I DHQase</fullName>
    </alternativeName>
    <alternativeName>
        <fullName evidence="1">Type I dehydroquinase</fullName>
        <shortName evidence="1">DHQ1</shortName>
    </alternativeName>
</protein>